<name>RL22_BORA1</name>
<organism>
    <name type="scientific">Bordetella avium (strain 197N)</name>
    <dbReference type="NCBI Taxonomy" id="360910"/>
    <lineage>
        <taxon>Bacteria</taxon>
        <taxon>Pseudomonadati</taxon>
        <taxon>Pseudomonadota</taxon>
        <taxon>Betaproteobacteria</taxon>
        <taxon>Burkholderiales</taxon>
        <taxon>Alcaligenaceae</taxon>
        <taxon>Bordetella</taxon>
    </lineage>
</organism>
<comment type="function">
    <text evidence="1">This protein binds specifically to 23S rRNA; its binding is stimulated by other ribosomal proteins, e.g. L4, L17, and L20. It is important during the early stages of 50S assembly. It makes multiple contacts with different domains of the 23S rRNA in the assembled 50S subunit and ribosome (By similarity).</text>
</comment>
<comment type="function">
    <text evidence="1">The globular domain of the protein is located near the polypeptide exit tunnel on the outside of the subunit, while an extended beta-hairpin is found that lines the wall of the exit tunnel in the center of the 70S ribosome.</text>
</comment>
<comment type="subunit">
    <text evidence="1">Part of the 50S ribosomal subunit.</text>
</comment>
<comment type="similarity">
    <text evidence="1">Belongs to the universal ribosomal protein uL22 family.</text>
</comment>
<feature type="chain" id="PRO_0000243126" description="Large ribosomal subunit protein uL22">
    <location>
        <begin position="1"/>
        <end position="109"/>
    </location>
</feature>
<reference key="1">
    <citation type="journal article" date="2006" name="J. Bacteriol.">
        <title>Comparison of the genome sequence of the poultry pathogen Bordetella avium with those of B. bronchiseptica, B. pertussis, and B. parapertussis reveals extensive diversity in surface structures associated with host interaction.</title>
        <authorList>
            <person name="Sebaihia M."/>
            <person name="Preston A."/>
            <person name="Maskell D.J."/>
            <person name="Kuzmiak H."/>
            <person name="Connell T.D."/>
            <person name="King N.D."/>
            <person name="Orndorff P.E."/>
            <person name="Miyamoto D.M."/>
            <person name="Thomson N.R."/>
            <person name="Harris D."/>
            <person name="Goble A."/>
            <person name="Lord A."/>
            <person name="Murphy L."/>
            <person name="Quail M.A."/>
            <person name="Rutter S."/>
            <person name="Squares R."/>
            <person name="Squares S."/>
            <person name="Woodward J."/>
            <person name="Parkhill J."/>
            <person name="Temple L.M."/>
        </authorList>
    </citation>
    <scope>NUCLEOTIDE SEQUENCE [LARGE SCALE GENOMIC DNA]</scope>
    <source>
        <strain>197N</strain>
    </source>
</reference>
<evidence type="ECO:0000255" key="1">
    <source>
        <dbReference type="HAMAP-Rule" id="MF_01331"/>
    </source>
</evidence>
<evidence type="ECO:0000305" key="2"/>
<protein>
    <recommendedName>
        <fullName evidence="1">Large ribosomal subunit protein uL22</fullName>
    </recommendedName>
    <alternativeName>
        <fullName evidence="2">50S ribosomal protein L22</fullName>
    </alternativeName>
</protein>
<keyword id="KW-1185">Reference proteome</keyword>
<keyword id="KW-0687">Ribonucleoprotein</keyword>
<keyword id="KW-0689">Ribosomal protein</keyword>
<keyword id="KW-0694">RNA-binding</keyword>
<keyword id="KW-0699">rRNA-binding</keyword>
<sequence length="109" mass="11782">METTAIIRGVHISAQKTRLVADLIRGKSVAQALNILTFSPKKAAVILKKAVESAIANAEHNDGADIDELKVTTIFVDKAQSMKRFSARAKGRGNRIEKQTCHITVKVGA</sequence>
<dbReference type="EMBL" id="AM167904">
    <property type="protein sequence ID" value="CAJ47614.1"/>
    <property type="molecule type" value="Genomic_DNA"/>
</dbReference>
<dbReference type="RefSeq" id="WP_010925688.1">
    <property type="nucleotide sequence ID" value="NC_010645.1"/>
</dbReference>
<dbReference type="SMR" id="Q2L2E3"/>
<dbReference type="STRING" id="360910.BAV0030"/>
<dbReference type="GeneID" id="93206263"/>
<dbReference type="KEGG" id="bav:BAV0030"/>
<dbReference type="eggNOG" id="COG0091">
    <property type="taxonomic scope" value="Bacteria"/>
</dbReference>
<dbReference type="HOGENOM" id="CLU_083987_3_3_4"/>
<dbReference type="OrthoDB" id="9805969at2"/>
<dbReference type="Proteomes" id="UP000001977">
    <property type="component" value="Chromosome"/>
</dbReference>
<dbReference type="GO" id="GO:0022625">
    <property type="term" value="C:cytosolic large ribosomal subunit"/>
    <property type="evidence" value="ECO:0007669"/>
    <property type="project" value="TreeGrafter"/>
</dbReference>
<dbReference type="GO" id="GO:0019843">
    <property type="term" value="F:rRNA binding"/>
    <property type="evidence" value="ECO:0007669"/>
    <property type="project" value="UniProtKB-UniRule"/>
</dbReference>
<dbReference type="GO" id="GO:0003735">
    <property type="term" value="F:structural constituent of ribosome"/>
    <property type="evidence" value="ECO:0007669"/>
    <property type="project" value="InterPro"/>
</dbReference>
<dbReference type="GO" id="GO:0006412">
    <property type="term" value="P:translation"/>
    <property type="evidence" value="ECO:0007669"/>
    <property type="project" value="UniProtKB-UniRule"/>
</dbReference>
<dbReference type="CDD" id="cd00336">
    <property type="entry name" value="Ribosomal_L22"/>
    <property type="match status" value="1"/>
</dbReference>
<dbReference type="FunFam" id="3.90.470.10:FF:000001">
    <property type="entry name" value="50S ribosomal protein L22"/>
    <property type="match status" value="1"/>
</dbReference>
<dbReference type="Gene3D" id="3.90.470.10">
    <property type="entry name" value="Ribosomal protein L22/L17"/>
    <property type="match status" value="1"/>
</dbReference>
<dbReference type="HAMAP" id="MF_01331_B">
    <property type="entry name" value="Ribosomal_uL22_B"/>
    <property type="match status" value="1"/>
</dbReference>
<dbReference type="InterPro" id="IPR001063">
    <property type="entry name" value="Ribosomal_uL22"/>
</dbReference>
<dbReference type="InterPro" id="IPR005727">
    <property type="entry name" value="Ribosomal_uL22_bac/chlpt-type"/>
</dbReference>
<dbReference type="InterPro" id="IPR047867">
    <property type="entry name" value="Ribosomal_uL22_bac/org-type"/>
</dbReference>
<dbReference type="InterPro" id="IPR018260">
    <property type="entry name" value="Ribosomal_uL22_CS"/>
</dbReference>
<dbReference type="InterPro" id="IPR036394">
    <property type="entry name" value="Ribosomal_uL22_sf"/>
</dbReference>
<dbReference type="NCBIfam" id="TIGR01044">
    <property type="entry name" value="rplV_bact"/>
    <property type="match status" value="1"/>
</dbReference>
<dbReference type="PANTHER" id="PTHR13501">
    <property type="entry name" value="CHLOROPLAST 50S RIBOSOMAL PROTEIN L22-RELATED"/>
    <property type="match status" value="1"/>
</dbReference>
<dbReference type="PANTHER" id="PTHR13501:SF8">
    <property type="entry name" value="LARGE RIBOSOMAL SUBUNIT PROTEIN UL22M"/>
    <property type="match status" value="1"/>
</dbReference>
<dbReference type="Pfam" id="PF00237">
    <property type="entry name" value="Ribosomal_L22"/>
    <property type="match status" value="1"/>
</dbReference>
<dbReference type="SUPFAM" id="SSF54843">
    <property type="entry name" value="Ribosomal protein L22"/>
    <property type="match status" value="1"/>
</dbReference>
<dbReference type="PROSITE" id="PS00464">
    <property type="entry name" value="RIBOSOMAL_L22"/>
    <property type="match status" value="1"/>
</dbReference>
<gene>
    <name evidence="1" type="primary">rplV</name>
    <name type="ordered locus">BAV0030</name>
</gene>
<accession>Q2L2E3</accession>
<proteinExistence type="inferred from homology"/>